<comment type="function">
    <text evidence="2">GTP hydrolase that promotes the GTP-dependent binding of aminoacyl-tRNA to the A-site of ribosomes during protein biosynthesis.</text>
</comment>
<comment type="catalytic activity">
    <reaction evidence="2">
        <text>GTP + H2O = GDP + phosphate + H(+)</text>
        <dbReference type="Rhea" id="RHEA:19669"/>
        <dbReference type="ChEBI" id="CHEBI:15377"/>
        <dbReference type="ChEBI" id="CHEBI:15378"/>
        <dbReference type="ChEBI" id="CHEBI:37565"/>
        <dbReference type="ChEBI" id="CHEBI:43474"/>
        <dbReference type="ChEBI" id="CHEBI:58189"/>
        <dbReference type="EC" id="3.6.5.3"/>
    </reaction>
    <physiologicalReaction direction="left-to-right" evidence="2">
        <dbReference type="Rhea" id="RHEA:19670"/>
    </physiologicalReaction>
</comment>
<comment type="subunit">
    <text evidence="2">Monomer.</text>
</comment>
<comment type="subcellular location">
    <subcellularLocation>
        <location evidence="2">Cytoplasm</location>
    </subcellularLocation>
</comment>
<comment type="similarity">
    <text evidence="2">Belongs to the TRAFAC class translation factor GTPase superfamily. Classic translation factor GTPase family. EF-Tu/EF-1A subfamily.</text>
</comment>
<protein>
    <recommendedName>
        <fullName evidence="2">Elongation factor Tu</fullName>
        <shortName evidence="2">EF-Tu</shortName>
        <ecNumber evidence="2">3.6.5.3</ecNumber>
    </recommendedName>
</protein>
<dbReference type="EC" id="3.6.5.3" evidence="2"/>
<dbReference type="EMBL" id="CP000140">
    <property type="protein sequence ID" value="ABR44002.1"/>
    <property type="molecule type" value="Genomic_DNA"/>
</dbReference>
<dbReference type="RefSeq" id="WP_005854209.1">
    <property type="nucleotide sequence ID" value="NZ_LR215978.1"/>
</dbReference>
<dbReference type="SMR" id="A6LE88"/>
<dbReference type="STRING" id="435591.BDI_2272"/>
<dbReference type="PaxDb" id="435591-BDI_2272"/>
<dbReference type="KEGG" id="pdi:BDI_2272"/>
<dbReference type="eggNOG" id="COG0050">
    <property type="taxonomic scope" value="Bacteria"/>
</dbReference>
<dbReference type="HOGENOM" id="CLU_007265_0_0_10"/>
<dbReference type="BioCyc" id="PDIS435591:G1G5A-2335-MONOMER"/>
<dbReference type="Proteomes" id="UP000000566">
    <property type="component" value="Chromosome"/>
</dbReference>
<dbReference type="GO" id="GO:0005829">
    <property type="term" value="C:cytosol"/>
    <property type="evidence" value="ECO:0007669"/>
    <property type="project" value="TreeGrafter"/>
</dbReference>
<dbReference type="GO" id="GO:0005525">
    <property type="term" value="F:GTP binding"/>
    <property type="evidence" value="ECO:0007669"/>
    <property type="project" value="UniProtKB-UniRule"/>
</dbReference>
<dbReference type="GO" id="GO:0003924">
    <property type="term" value="F:GTPase activity"/>
    <property type="evidence" value="ECO:0007669"/>
    <property type="project" value="InterPro"/>
</dbReference>
<dbReference type="GO" id="GO:0003746">
    <property type="term" value="F:translation elongation factor activity"/>
    <property type="evidence" value="ECO:0007669"/>
    <property type="project" value="UniProtKB-UniRule"/>
</dbReference>
<dbReference type="CDD" id="cd01884">
    <property type="entry name" value="EF_Tu"/>
    <property type="match status" value="1"/>
</dbReference>
<dbReference type="CDD" id="cd03697">
    <property type="entry name" value="EFTU_II"/>
    <property type="match status" value="1"/>
</dbReference>
<dbReference type="CDD" id="cd03707">
    <property type="entry name" value="EFTU_III"/>
    <property type="match status" value="1"/>
</dbReference>
<dbReference type="FunFam" id="2.40.30.10:FF:000002">
    <property type="entry name" value="Elongation factor Tu"/>
    <property type="match status" value="1"/>
</dbReference>
<dbReference type="FunFam" id="3.40.50.300:FF:000003">
    <property type="entry name" value="Elongation factor Tu"/>
    <property type="match status" value="1"/>
</dbReference>
<dbReference type="FunFam" id="2.40.30.10:FF:000020">
    <property type="entry name" value="Translation elongation factor EF-1"/>
    <property type="match status" value="1"/>
</dbReference>
<dbReference type="Gene3D" id="3.40.50.300">
    <property type="entry name" value="P-loop containing nucleotide triphosphate hydrolases"/>
    <property type="match status" value="1"/>
</dbReference>
<dbReference type="Gene3D" id="2.40.30.10">
    <property type="entry name" value="Translation factors"/>
    <property type="match status" value="2"/>
</dbReference>
<dbReference type="HAMAP" id="MF_00118_B">
    <property type="entry name" value="EF_Tu_B"/>
    <property type="match status" value="1"/>
</dbReference>
<dbReference type="InterPro" id="IPR041709">
    <property type="entry name" value="EF-Tu_GTP-bd"/>
</dbReference>
<dbReference type="InterPro" id="IPR050055">
    <property type="entry name" value="EF-Tu_GTPase"/>
</dbReference>
<dbReference type="InterPro" id="IPR004161">
    <property type="entry name" value="EFTu-like_2"/>
</dbReference>
<dbReference type="InterPro" id="IPR033720">
    <property type="entry name" value="EFTU_2"/>
</dbReference>
<dbReference type="InterPro" id="IPR031157">
    <property type="entry name" value="G_TR_CS"/>
</dbReference>
<dbReference type="InterPro" id="IPR027417">
    <property type="entry name" value="P-loop_NTPase"/>
</dbReference>
<dbReference type="InterPro" id="IPR005225">
    <property type="entry name" value="Small_GTP-bd"/>
</dbReference>
<dbReference type="InterPro" id="IPR000795">
    <property type="entry name" value="T_Tr_GTP-bd_dom"/>
</dbReference>
<dbReference type="InterPro" id="IPR009000">
    <property type="entry name" value="Transl_B-barrel_sf"/>
</dbReference>
<dbReference type="InterPro" id="IPR009001">
    <property type="entry name" value="Transl_elong_EF1A/Init_IF2_C"/>
</dbReference>
<dbReference type="InterPro" id="IPR004541">
    <property type="entry name" value="Transl_elong_EFTu/EF1A_bac/org"/>
</dbReference>
<dbReference type="InterPro" id="IPR004160">
    <property type="entry name" value="Transl_elong_EFTu/EF1A_C"/>
</dbReference>
<dbReference type="NCBIfam" id="TIGR00485">
    <property type="entry name" value="EF-Tu"/>
    <property type="match status" value="1"/>
</dbReference>
<dbReference type="NCBIfam" id="NF000766">
    <property type="entry name" value="PRK00049.1"/>
    <property type="match status" value="1"/>
</dbReference>
<dbReference type="NCBIfam" id="NF009372">
    <property type="entry name" value="PRK12735.1"/>
    <property type="match status" value="1"/>
</dbReference>
<dbReference type="NCBIfam" id="NF009373">
    <property type="entry name" value="PRK12736.1"/>
    <property type="match status" value="1"/>
</dbReference>
<dbReference type="NCBIfam" id="TIGR00231">
    <property type="entry name" value="small_GTP"/>
    <property type="match status" value="1"/>
</dbReference>
<dbReference type="PANTHER" id="PTHR43721:SF22">
    <property type="entry name" value="ELONGATION FACTOR TU, MITOCHONDRIAL"/>
    <property type="match status" value="1"/>
</dbReference>
<dbReference type="PANTHER" id="PTHR43721">
    <property type="entry name" value="ELONGATION FACTOR TU-RELATED"/>
    <property type="match status" value="1"/>
</dbReference>
<dbReference type="Pfam" id="PF00009">
    <property type="entry name" value="GTP_EFTU"/>
    <property type="match status" value="1"/>
</dbReference>
<dbReference type="Pfam" id="PF03144">
    <property type="entry name" value="GTP_EFTU_D2"/>
    <property type="match status" value="1"/>
</dbReference>
<dbReference type="Pfam" id="PF03143">
    <property type="entry name" value="GTP_EFTU_D3"/>
    <property type="match status" value="1"/>
</dbReference>
<dbReference type="PRINTS" id="PR00315">
    <property type="entry name" value="ELONGATNFCT"/>
</dbReference>
<dbReference type="SUPFAM" id="SSF50465">
    <property type="entry name" value="EF-Tu/eEF-1alpha/eIF2-gamma C-terminal domain"/>
    <property type="match status" value="1"/>
</dbReference>
<dbReference type="SUPFAM" id="SSF52540">
    <property type="entry name" value="P-loop containing nucleoside triphosphate hydrolases"/>
    <property type="match status" value="1"/>
</dbReference>
<dbReference type="SUPFAM" id="SSF50447">
    <property type="entry name" value="Translation proteins"/>
    <property type="match status" value="1"/>
</dbReference>
<dbReference type="PROSITE" id="PS00301">
    <property type="entry name" value="G_TR_1"/>
    <property type="match status" value="1"/>
</dbReference>
<dbReference type="PROSITE" id="PS51722">
    <property type="entry name" value="G_TR_2"/>
    <property type="match status" value="1"/>
</dbReference>
<accession>A6LE88</accession>
<feature type="chain" id="PRO_1000015717" description="Elongation factor Tu">
    <location>
        <begin position="1"/>
        <end position="395"/>
    </location>
</feature>
<feature type="domain" description="tr-type G">
    <location>
        <begin position="10"/>
        <end position="205"/>
    </location>
</feature>
<feature type="region of interest" description="G1" evidence="1">
    <location>
        <begin position="19"/>
        <end position="26"/>
    </location>
</feature>
<feature type="region of interest" description="G2" evidence="1">
    <location>
        <begin position="60"/>
        <end position="64"/>
    </location>
</feature>
<feature type="region of interest" description="G3" evidence="1">
    <location>
        <begin position="81"/>
        <end position="84"/>
    </location>
</feature>
<feature type="region of interest" description="G4" evidence="1">
    <location>
        <begin position="136"/>
        <end position="139"/>
    </location>
</feature>
<feature type="region of interest" description="G5" evidence="1">
    <location>
        <begin position="174"/>
        <end position="176"/>
    </location>
</feature>
<feature type="binding site" evidence="2">
    <location>
        <begin position="19"/>
        <end position="26"/>
    </location>
    <ligand>
        <name>GTP</name>
        <dbReference type="ChEBI" id="CHEBI:37565"/>
    </ligand>
</feature>
<feature type="binding site" evidence="2">
    <location>
        <position position="26"/>
    </location>
    <ligand>
        <name>Mg(2+)</name>
        <dbReference type="ChEBI" id="CHEBI:18420"/>
    </ligand>
</feature>
<feature type="binding site" evidence="2">
    <location>
        <begin position="81"/>
        <end position="85"/>
    </location>
    <ligand>
        <name>GTP</name>
        <dbReference type="ChEBI" id="CHEBI:37565"/>
    </ligand>
</feature>
<feature type="binding site" evidence="2">
    <location>
        <begin position="136"/>
        <end position="139"/>
    </location>
    <ligand>
        <name>GTP</name>
        <dbReference type="ChEBI" id="CHEBI:37565"/>
    </ligand>
</feature>
<name>EFTU_PARD8</name>
<keyword id="KW-0963">Cytoplasm</keyword>
<keyword id="KW-0251">Elongation factor</keyword>
<keyword id="KW-0342">GTP-binding</keyword>
<keyword id="KW-0378">Hydrolase</keyword>
<keyword id="KW-0460">Magnesium</keyword>
<keyword id="KW-0479">Metal-binding</keyword>
<keyword id="KW-0547">Nucleotide-binding</keyword>
<keyword id="KW-0648">Protein biosynthesis</keyword>
<keyword id="KW-1185">Reference proteome</keyword>
<organism>
    <name type="scientific">Parabacteroides distasonis (strain ATCC 8503 / DSM 20701 / CIP 104284 / JCM 5825 / NCTC 11152)</name>
    <dbReference type="NCBI Taxonomy" id="435591"/>
    <lineage>
        <taxon>Bacteria</taxon>
        <taxon>Pseudomonadati</taxon>
        <taxon>Bacteroidota</taxon>
        <taxon>Bacteroidia</taxon>
        <taxon>Bacteroidales</taxon>
        <taxon>Tannerellaceae</taxon>
        <taxon>Parabacteroides</taxon>
    </lineage>
</organism>
<reference key="1">
    <citation type="journal article" date="2007" name="PLoS Biol.">
        <title>Evolution of symbiotic bacteria in the distal human intestine.</title>
        <authorList>
            <person name="Xu J."/>
            <person name="Mahowald M.A."/>
            <person name="Ley R.E."/>
            <person name="Lozupone C.A."/>
            <person name="Hamady M."/>
            <person name="Martens E.C."/>
            <person name="Henrissat B."/>
            <person name="Coutinho P.M."/>
            <person name="Minx P."/>
            <person name="Latreille P."/>
            <person name="Cordum H."/>
            <person name="Van Brunt A."/>
            <person name="Kim K."/>
            <person name="Fulton R.S."/>
            <person name="Fulton L.A."/>
            <person name="Clifton S.W."/>
            <person name="Wilson R.K."/>
            <person name="Knight R.D."/>
            <person name="Gordon J.I."/>
        </authorList>
    </citation>
    <scope>NUCLEOTIDE SEQUENCE [LARGE SCALE GENOMIC DNA]</scope>
    <source>
        <strain>ATCC 8503 / DSM 20701 / CIP 104284 / JCM 5825 / NCTC 11152</strain>
    </source>
</reference>
<gene>
    <name evidence="2" type="primary">tuf</name>
    <name type="ordered locus">BDI_2272</name>
</gene>
<proteinExistence type="inferred from homology"/>
<evidence type="ECO:0000250" key="1"/>
<evidence type="ECO:0000255" key="2">
    <source>
        <dbReference type="HAMAP-Rule" id="MF_00118"/>
    </source>
</evidence>
<sequence>MAKEKFDRSKPHVNIGTIGHVDHGKTTLTAAITTVLAKKGLSELRSFDSIDNAPEEKERGITINTSHVEYQTANRHYAHVDCPGHADYVKNMVTGAAQMDGAIIVVAATDGPMPQTREHILLARQVNVPRLVVFMNKCDMVDDEEMLELVEMEMRELLSFYQFDGDNTPIIRGSALGALNGDAQWEDKVMELMEACDTWIPLPPREIDKPFLMPVEDVFSITGRGTVATGRIETGIVKVGEEVQIIGLGAAGKKSVVTGVEMFRKLLDQGEAGDNVGLLLRGIDKNEIKRGMVICHPGQVKEHSKFKAEVYILKKEEGGRHTPFHNKYRPQFYIRTLDVTGEITLPEGTEMVMPGDNVTIEVELIYPVACSVGLRFAIREGGRTVGAGQITELEN</sequence>